<reference key="1">
    <citation type="submission" date="1995-12" db="EMBL/GenBank/DDBJ databases">
        <authorList>
            <person name="Platzer J."/>
            <person name="Schmitt R."/>
        </authorList>
    </citation>
    <scope>NUCLEOTIDE SEQUENCE [GENOMIC DNA]</scope>
    <source>
        <strain>RU11/001</strain>
    </source>
</reference>
<reference key="2">
    <citation type="submission" date="2001-01" db="EMBL/GenBank/DDBJ databases">
        <authorList>
            <person name="Schmitt R."/>
        </authorList>
    </citation>
    <scope>SEQUENCE REVISION TO 53</scope>
</reference>
<name>FLAD_RHIML</name>
<proteinExistence type="inferred from homology"/>
<feature type="chain" id="PRO_0000182627" description="Flagellin D">
    <location>
        <begin position="1"/>
        <end position="395"/>
    </location>
</feature>
<sequence>MTSILTNVAAMAALQTLRGIDSNMEETQARVSSGLRVGTASDNAAYWSIATTMRSDNMALSAVQDALGLGAAKVDTAYAGMENAVEVVKEIRAKLVAATEDGVDKAKIQEEIEQLKQQLTSIATAASFSGENWLQADLTAPVTKSVVGSFVRDSSGVVSVKTIDYVLDGNSVLFDTVGNNGILDKVYDVSESSVTLSINTGGVVSEHTVAAYTVDDLIAGGAVFQGNYALAGGVNYVKVEGVWVEAVASSGAPGQEVAAVTTAAAPITADSWAVDTTAGPAASVPAPASIENIDITNAAQAANLDALIRGVDEALEDLISATSALGSISMRIGMQEEFVSKLTDSIDSGIGRLVDADMNEESTRLKALQTQQQLAIQSLSIANTNSENILQLFRQ</sequence>
<dbReference type="EMBL" id="L49337">
    <property type="protein sequence ID" value="AAB81421.2"/>
    <property type="molecule type" value="Genomic_DNA"/>
</dbReference>
<dbReference type="RefSeq" id="WP_003529883.1">
    <property type="nucleotide sequence ID" value="NZ_BJNJ01000118.1"/>
</dbReference>
<dbReference type="SMR" id="Q52942"/>
<dbReference type="PATRIC" id="fig|382.53.peg.2609"/>
<dbReference type="GO" id="GO:0009288">
    <property type="term" value="C:bacterial-type flagellum"/>
    <property type="evidence" value="ECO:0007669"/>
    <property type="project" value="UniProtKB-SubCell"/>
</dbReference>
<dbReference type="GO" id="GO:0005576">
    <property type="term" value="C:extracellular region"/>
    <property type="evidence" value="ECO:0007669"/>
    <property type="project" value="UniProtKB-SubCell"/>
</dbReference>
<dbReference type="GO" id="GO:0005198">
    <property type="term" value="F:structural molecule activity"/>
    <property type="evidence" value="ECO:0007669"/>
    <property type="project" value="InterPro"/>
</dbReference>
<dbReference type="Gene3D" id="1.20.1330.10">
    <property type="entry name" value="f41 fragment of flagellin, N-terminal domain"/>
    <property type="match status" value="2"/>
</dbReference>
<dbReference type="InterPro" id="IPR001492">
    <property type="entry name" value="Flagellin"/>
</dbReference>
<dbReference type="InterPro" id="IPR046358">
    <property type="entry name" value="Flagellin_C"/>
</dbReference>
<dbReference type="InterPro" id="IPR001029">
    <property type="entry name" value="Flagellin_N"/>
</dbReference>
<dbReference type="PANTHER" id="PTHR42792">
    <property type="entry name" value="FLAGELLIN"/>
    <property type="match status" value="1"/>
</dbReference>
<dbReference type="PANTHER" id="PTHR42792:SF2">
    <property type="entry name" value="FLAGELLIN"/>
    <property type="match status" value="1"/>
</dbReference>
<dbReference type="Pfam" id="PF00700">
    <property type="entry name" value="Flagellin_C"/>
    <property type="match status" value="1"/>
</dbReference>
<dbReference type="Pfam" id="PF00669">
    <property type="entry name" value="Flagellin_N"/>
    <property type="match status" value="1"/>
</dbReference>
<dbReference type="PRINTS" id="PR00207">
    <property type="entry name" value="FLAGELLIN"/>
</dbReference>
<dbReference type="SUPFAM" id="SSF64518">
    <property type="entry name" value="Phase 1 flagellin"/>
    <property type="match status" value="1"/>
</dbReference>
<keyword id="KW-0975">Bacterial flagellum</keyword>
<keyword id="KW-0964">Secreted</keyword>
<accession>Q52942</accession>
<protein>
    <recommendedName>
        <fullName>Flagellin D</fullName>
    </recommendedName>
</protein>
<evidence type="ECO:0000305" key="1"/>
<organism>
    <name type="scientific">Rhizobium meliloti</name>
    <name type="common">Ensifer meliloti</name>
    <name type="synonym">Sinorhizobium meliloti</name>
    <dbReference type="NCBI Taxonomy" id="382"/>
    <lineage>
        <taxon>Bacteria</taxon>
        <taxon>Pseudomonadati</taxon>
        <taxon>Pseudomonadota</taxon>
        <taxon>Alphaproteobacteria</taxon>
        <taxon>Hyphomicrobiales</taxon>
        <taxon>Rhizobiaceae</taxon>
        <taxon>Sinorhizobium/Ensifer group</taxon>
        <taxon>Sinorhizobium</taxon>
    </lineage>
</organism>
<gene>
    <name type="primary">flaD</name>
</gene>
<comment type="function">
    <text>Flagellin is the subunit protein which polymerizes to form the filaments of bacterial flagella.</text>
</comment>
<comment type="subcellular location">
    <subcellularLocation>
        <location>Secreted</location>
    </subcellularLocation>
    <subcellularLocation>
        <location>Bacterial flagellum</location>
    </subcellularLocation>
</comment>
<comment type="similarity">
    <text evidence="1">Belongs to the bacterial flagellin family.</text>
</comment>